<keyword id="KW-0903">Direct protein sequencing</keyword>
<keyword id="KW-1015">Disulfide bond</keyword>
<keyword id="KW-0964">Secreted</keyword>
<keyword id="KW-0800">Toxin</keyword>
<sequence>MECYRMSNIVTCQPWEKFCYKEVTMFFPNHPVHLSGCASECTETNSKFCCTTDKCNGAGSG</sequence>
<comment type="function">
    <text evidence="2">Shows no cytotoxicity and does not inhibit the binding of alpha-bungarotoxin to nicotinic acetylcholine receptors of muscle and alpha-7/CHRNA7 types. However, it potentiates the binding of alpha-bungarotoxin to the acetylcholine-binding protein from Lymnaea stagnalis.</text>
</comment>
<comment type="subcellular location">
    <subcellularLocation>
        <location evidence="2">Secreted</location>
    </subcellularLocation>
</comment>
<comment type="tissue specificity">
    <text evidence="5">Expressed by the venom gland.</text>
</comment>
<comment type="mass spectrometry"/>
<comment type="miscellaneous">
    <text evidence="4">Is classified as a P-type cytotoxin, since a proline residue stands at position 28 (Pro-31 in standard classification).</text>
</comment>
<comment type="similarity">
    <text evidence="4">Belongs to the three-finger toxin family. Short-chain subfamily.</text>
</comment>
<name>3SX_NAJKA</name>
<proteinExistence type="evidence at protein level"/>
<dbReference type="SMR" id="P0DSN0"/>
<dbReference type="GO" id="GO:0005576">
    <property type="term" value="C:extracellular region"/>
    <property type="evidence" value="ECO:0007669"/>
    <property type="project" value="UniProtKB-SubCell"/>
</dbReference>
<dbReference type="GO" id="GO:0090729">
    <property type="term" value="F:toxin activity"/>
    <property type="evidence" value="ECO:0007669"/>
    <property type="project" value="UniProtKB-KW"/>
</dbReference>
<dbReference type="CDD" id="cd00206">
    <property type="entry name" value="TFP_snake_toxin"/>
    <property type="match status" value="1"/>
</dbReference>
<dbReference type="Gene3D" id="2.10.60.10">
    <property type="entry name" value="CD59"/>
    <property type="match status" value="1"/>
</dbReference>
<dbReference type="InterPro" id="IPR003571">
    <property type="entry name" value="Snake_3FTx"/>
</dbReference>
<dbReference type="InterPro" id="IPR045860">
    <property type="entry name" value="Snake_toxin-like_sf"/>
</dbReference>
<dbReference type="InterPro" id="IPR054131">
    <property type="entry name" value="Toxin_cobra-type"/>
</dbReference>
<dbReference type="Pfam" id="PF21947">
    <property type="entry name" value="Toxin_cobra-type"/>
    <property type="match status" value="1"/>
</dbReference>
<dbReference type="SUPFAM" id="SSF57302">
    <property type="entry name" value="Snake toxin-like"/>
    <property type="match status" value="1"/>
</dbReference>
<accession>P0DSN0</accession>
<feature type="chain" id="PRO_0000447298" description="Nakoroxin" evidence="2">
    <location>
        <begin position="1"/>
        <end position="61"/>
    </location>
</feature>
<feature type="disulfide bond" evidence="1">
    <location>
        <begin position="3"/>
        <end position="19"/>
    </location>
</feature>
<feature type="disulfide bond" evidence="1">
    <location>
        <begin position="12"/>
        <end position="37"/>
    </location>
</feature>
<feature type="disulfide bond" evidence="1">
    <location>
        <begin position="41"/>
        <end position="49"/>
    </location>
</feature>
<feature type="disulfide bond" evidence="1">
    <location>
        <begin position="50"/>
        <end position="55"/>
    </location>
</feature>
<evidence type="ECO:0000250" key="1">
    <source>
        <dbReference type="UniProtKB" id="P60301"/>
    </source>
</evidence>
<evidence type="ECO:0000269" key="2">
    <source>
    </source>
</evidence>
<evidence type="ECO:0000303" key="3">
    <source>
    </source>
</evidence>
<evidence type="ECO:0000305" key="4"/>
<evidence type="ECO:0000305" key="5">
    <source>
    </source>
</evidence>
<organism>
    <name type="scientific">Naja kaouthia</name>
    <name type="common">Monocled cobra</name>
    <name type="synonym">Naja siamensis</name>
    <dbReference type="NCBI Taxonomy" id="8649"/>
    <lineage>
        <taxon>Eukaryota</taxon>
        <taxon>Metazoa</taxon>
        <taxon>Chordata</taxon>
        <taxon>Craniata</taxon>
        <taxon>Vertebrata</taxon>
        <taxon>Euteleostomi</taxon>
        <taxon>Lepidosauria</taxon>
        <taxon>Squamata</taxon>
        <taxon>Bifurcata</taxon>
        <taxon>Unidentata</taxon>
        <taxon>Episquamata</taxon>
        <taxon>Toxicofera</taxon>
        <taxon>Serpentes</taxon>
        <taxon>Colubroidea</taxon>
        <taxon>Elapidae</taxon>
        <taxon>Elapinae</taxon>
        <taxon>Naja</taxon>
    </lineage>
</organism>
<protein>
    <recommendedName>
        <fullName evidence="3">Nakoroxin</fullName>
    </recommendedName>
    <alternativeName>
        <fullName evidence="3">Naja kaouthia orphan toxin</fullName>
    </alternativeName>
    <alternativeName>
        <fullName>Three-finger toxin</fullName>
        <shortName>3FTx</shortName>
    </alternativeName>
</protein>
<reference key="1">
    <citation type="journal article" date="2017" name="Dokl. Biochem. Biophys.">
        <title>New paradoxical three-finger toxin from the cobra Naja kaouthia venom: isolation and characterization.</title>
        <authorList>
            <person name="Osipov A.V."/>
            <person name="Meshcheryakova A.V."/>
            <person name="Starkov V.G."/>
            <person name="Ziganshin R.K."/>
            <person name="Oustitch T.L."/>
            <person name="Peters L.E."/>
            <person name="Tsetlin V.I."/>
            <person name="Utkin Y.N."/>
        </authorList>
    </citation>
    <scope>PROTEIN SEQUENCE</scope>
    <scope>FUNCTION</scope>
    <scope>SUBCELLULAR LOCATION</scope>
    <scope>MASS SPECTROMETRY</scope>
    <source>
        <tissue>Venom</tissue>
    </source>
</reference>